<organism>
    <name type="scientific">Haemophilus influenzae (strain ATCC 51907 / DSM 11121 / KW20 / Rd)</name>
    <dbReference type="NCBI Taxonomy" id="71421"/>
    <lineage>
        <taxon>Bacteria</taxon>
        <taxon>Pseudomonadati</taxon>
        <taxon>Pseudomonadota</taxon>
        <taxon>Gammaproteobacteria</taxon>
        <taxon>Pasteurellales</taxon>
        <taxon>Pasteurellaceae</taxon>
        <taxon>Haemophilus</taxon>
    </lineage>
</organism>
<name>FABZ_HAEIN</name>
<comment type="function">
    <text evidence="1">Involved in unsaturated fatty acids biosynthesis. Catalyzes the dehydration of short chain beta-hydroxyacyl-ACPs and long chain saturated and unsaturated beta-hydroxyacyl-ACPs.</text>
</comment>
<comment type="catalytic activity">
    <reaction evidence="1">
        <text>a (3R)-hydroxyacyl-[ACP] = a (2E)-enoyl-[ACP] + H2O</text>
        <dbReference type="Rhea" id="RHEA:13097"/>
        <dbReference type="Rhea" id="RHEA-COMP:9925"/>
        <dbReference type="Rhea" id="RHEA-COMP:9945"/>
        <dbReference type="ChEBI" id="CHEBI:15377"/>
        <dbReference type="ChEBI" id="CHEBI:78784"/>
        <dbReference type="ChEBI" id="CHEBI:78827"/>
        <dbReference type="EC" id="4.2.1.59"/>
    </reaction>
</comment>
<comment type="subcellular location">
    <subcellularLocation>
        <location evidence="1">Cytoplasm</location>
    </subcellularLocation>
</comment>
<comment type="similarity">
    <text evidence="1">Belongs to the thioester dehydratase family. FabZ subfamily.</text>
</comment>
<gene>
    <name evidence="1" type="primary">fabZ</name>
    <name type="ordered locus">HI_1062</name>
</gene>
<sequence length="148" mass="16583">MSEQQPKVIESKEIMTLLPHRYPFLLVDRVLDFKEGEWLKAIKNISVNEPCFTGHFPGEPILPGVLILEALAQAMGILAFKTHELKGGELFYFAGIDEARFKRPVLPGDQMELNVQVIKKRRGITAFTGVATVNGEIACEAKLMCARR</sequence>
<protein>
    <recommendedName>
        <fullName evidence="1">3-hydroxyacyl-[acyl-carrier-protein] dehydratase FabZ</fullName>
        <ecNumber evidence="1">4.2.1.59</ecNumber>
    </recommendedName>
    <alternativeName>
        <fullName evidence="1">(3R)-hydroxymyristoyl-[acyl-carrier-protein] dehydratase</fullName>
        <shortName evidence="1">(3R)-hydroxymyristoyl-ACP dehydrase</shortName>
    </alternativeName>
    <alternativeName>
        <fullName evidence="1">Beta-hydroxyacyl-ACP dehydratase</fullName>
    </alternativeName>
</protein>
<proteinExistence type="inferred from homology"/>
<reference key="1">
    <citation type="journal article" date="1995" name="Science">
        <title>Whole-genome random sequencing and assembly of Haemophilus influenzae Rd.</title>
        <authorList>
            <person name="Fleischmann R.D."/>
            <person name="Adams M.D."/>
            <person name="White O."/>
            <person name="Clayton R.A."/>
            <person name="Kirkness E.F."/>
            <person name="Kerlavage A.R."/>
            <person name="Bult C.J."/>
            <person name="Tomb J.-F."/>
            <person name="Dougherty B.A."/>
            <person name="Merrick J.M."/>
            <person name="McKenney K."/>
            <person name="Sutton G.G."/>
            <person name="FitzHugh W."/>
            <person name="Fields C.A."/>
            <person name="Gocayne J.D."/>
            <person name="Scott J.D."/>
            <person name="Shirley R."/>
            <person name="Liu L.-I."/>
            <person name="Glodek A."/>
            <person name="Kelley J.M."/>
            <person name="Weidman J.F."/>
            <person name="Phillips C.A."/>
            <person name="Spriggs T."/>
            <person name="Hedblom E."/>
            <person name="Cotton M.D."/>
            <person name="Utterback T.R."/>
            <person name="Hanna M.C."/>
            <person name="Nguyen D.T."/>
            <person name="Saudek D.M."/>
            <person name="Brandon R.C."/>
            <person name="Fine L.D."/>
            <person name="Fritchman J.L."/>
            <person name="Fuhrmann J.L."/>
            <person name="Geoghagen N.S.M."/>
            <person name="Gnehm C.L."/>
            <person name="McDonald L.A."/>
            <person name="Small K.V."/>
            <person name="Fraser C.M."/>
            <person name="Smith H.O."/>
            <person name="Venter J.C."/>
        </authorList>
    </citation>
    <scope>NUCLEOTIDE SEQUENCE [LARGE SCALE GENOMIC DNA]</scope>
    <source>
        <strain>ATCC 51907 / DSM 11121 / KW20 / Rd</strain>
    </source>
</reference>
<reference key="2">
    <citation type="journal article" date="1996" name="Gene">
        <title>Cloning and expression of genes encoding lipid A biosynthesis from Haemophilus influenzae type b.</title>
        <authorList>
            <person name="Servos S."/>
            <person name="Khan S."/>
            <person name="Maskell D."/>
        </authorList>
    </citation>
    <scope>NUCLEOTIDE SEQUENCE [GENOMIC DNA] OF 101-148</scope>
    <source>
        <strain>RM 7004 / Serotype B</strain>
    </source>
</reference>
<feature type="chain" id="PRO_0000091686" description="3-hydroxyacyl-[acyl-carrier-protein] dehydratase FabZ">
    <location>
        <begin position="1"/>
        <end position="148"/>
    </location>
</feature>
<feature type="active site" evidence="1">
    <location>
        <position position="55"/>
    </location>
</feature>
<dbReference type="EC" id="4.2.1.59" evidence="1"/>
<dbReference type="EMBL" id="L42023">
    <property type="protein sequence ID" value="AAC22717.1"/>
    <property type="molecule type" value="Genomic_DNA"/>
</dbReference>
<dbReference type="EMBL" id="X87416">
    <property type="protein sequence ID" value="CAA60864.1"/>
    <property type="molecule type" value="Genomic_DNA"/>
</dbReference>
<dbReference type="PIR" id="G64180">
    <property type="entry name" value="G64180"/>
</dbReference>
<dbReference type="RefSeq" id="NP_439220.1">
    <property type="nucleotide sequence ID" value="NC_000907.1"/>
</dbReference>
<dbReference type="SMR" id="P45012"/>
<dbReference type="STRING" id="71421.HI_1062"/>
<dbReference type="EnsemblBacteria" id="AAC22717">
    <property type="protein sequence ID" value="AAC22717"/>
    <property type="gene ID" value="HI_1062"/>
</dbReference>
<dbReference type="KEGG" id="hin:HI_1062"/>
<dbReference type="PATRIC" id="fig|71421.8.peg.1106"/>
<dbReference type="eggNOG" id="COG0764">
    <property type="taxonomic scope" value="Bacteria"/>
</dbReference>
<dbReference type="HOGENOM" id="CLU_078912_1_0_6"/>
<dbReference type="OrthoDB" id="9772788at2"/>
<dbReference type="PhylomeDB" id="P45012"/>
<dbReference type="BioCyc" id="HINF71421:G1GJ1-1099-MONOMER"/>
<dbReference type="Proteomes" id="UP000000579">
    <property type="component" value="Chromosome"/>
</dbReference>
<dbReference type="GO" id="GO:0005737">
    <property type="term" value="C:cytoplasm"/>
    <property type="evidence" value="ECO:0007669"/>
    <property type="project" value="UniProtKB-SubCell"/>
</dbReference>
<dbReference type="GO" id="GO:0016020">
    <property type="term" value="C:membrane"/>
    <property type="evidence" value="ECO:0007669"/>
    <property type="project" value="GOC"/>
</dbReference>
<dbReference type="GO" id="GO:0019171">
    <property type="term" value="F:(3R)-hydroxyacyl-[acyl-carrier-protein] dehydratase activity"/>
    <property type="evidence" value="ECO:0007669"/>
    <property type="project" value="UniProtKB-EC"/>
</dbReference>
<dbReference type="GO" id="GO:0006633">
    <property type="term" value="P:fatty acid biosynthetic process"/>
    <property type="evidence" value="ECO:0007669"/>
    <property type="project" value="UniProtKB-UniRule"/>
</dbReference>
<dbReference type="GO" id="GO:0009245">
    <property type="term" value="P:lipid A biosynthetic process"/>
    <property type="evidence" value="ECO:0007669"/>
    <property type="project" value="UniProtKB-UniRule"/>
</dbReference>
<dbReference type="CDD" id="cd01288">
    <property type="entry name" value="FabZ"/>
    <property type="match status" value="1"/>
</dbReference>
<dbReference type="FunFam" id="3.10.129.10:FF:000001">
    <property type="entry name" value="3-hydroxyacyl-[acyl-carrier-protein] dehydratase FabZ"/>
    <property type="match status" value="1"/>
</dbReference>
<dbReference type="Gene3D" id="3.10.129.10">
    <property type="entry name" value="Hotdog Thioesterase"/>
    <property type="match status" value="1"/>
</dbReference>
<dbReference type="HAMAP" id="MF_00406">
    <property type="entry name" value="FabZ"/>
    <property type="match status" value="1"/>
</dbReference>
<dbReference type="InterPro" id="IPR013114">
    <property type="entry name" value="FabA_FabZ"/>
</dbReference>
<dbReference type="InterPro" id="IPR010084">
    <property type="entry name" value="FabZ"/>
</dbReference>
<dbReference type="InterPro" id="IPR029069">
    <property type="entry name" value="HotDog_dom_sf"/>
</dbReference>
<dbReference type="NCBIfam" id="TIGR01750">
    <property type="entry name" value="fabZ"/>
    <property type="match status" value="1"/>
</dbReference>
<dbReference type="NCBIfam" id="NF000582">
    <property type="entry name" value="PRK00006.1"/>
    <property type="match status" value="1"/>
</dbReference>
<dbReference type="PANTHER" id="PTHR30272">
    <property type="entry name" value="3-HYDROXYACYL-[ACYL-CARRIER-PROTEIN] DEHYDRATASE"/>
    <property type="match status" value="1"/>
</dbReference>
<dbReference type="PANTHER" id="PTHR30272:SF1">
    <property type="entry name" value="3-HYDROXYACYL-[ACYL-CARRIER-PROTEIN] DEHYDRATASE"/>
    <property type="match status" value="1"/>
</dbReference>
<dbReference type="Pfam" id="PF07977">
    <property type="entry name" value="FabA"/>
    <property type="match status" value="1"/>
</dbReference>
<dbReference type="SUPFAM" id="SSF54637">
    <property type="entry name" value="Thioesterase/thiol ester dehydrase-isomerase"/>
    <property type="match status" value="1"/>
</dbReference>
<evidence type="ECO:0000255" key="1">
    <source>
        <dbReference type="HAMAP-Rule" id="MF_00406"/>
    </source>
</evidence>
<accession>P45012</accession>
<keyword id="KW-0963">Cytoplasm</keyword>
<keyword id="KW-0441">Lipid A biosynthesis</keyword>
<keyword id="KW-0444">Lipid biosynthesis</keyword>
<keyword id="KW-0443">Lipid metabolism</keyword>
<keyword id="KW-0456">Lyase</keyword>
<keyword id="KW-1185">Reference proteome</keyword>